<dbReference type="EMBL" id="BX294144">
    <property type="protein sequence ID" value="CAD74996.1"/>
    <property type="molecule type" value="Genomic_DNA"/>
</dbReference>
<dbReference type="RefSeq" id="NP_867450.1">
    <property type="nucleotide sequence ID" value="NC_005027.1"/>
</dbReference>
<dbReference type="RefSeq" id="WP_007327901.1">
    <property type="nucleotide sequence ID" value="NC_005027.1"/>
</dbReference>
<dbReference type="SMR" id="Q7UPR5"/>
<dbReference type="FunCoup" id="Q7UPR5">
    <property type="interactions" value="541"/>
</dbReference>
<dbReference type="STRING" id="243090.RB6770"/>
<dbReference type="EnsemblBacteria" id="CAD74996">
    <property type="protein sequence ID" value="CAD74996"/>
    <property type="gene ID" value="RB6770"/>
</dbReference>
<dbReference type="GeneID" id="90610135"/>
<dbReference type="KEGG" id="rba:RB6770"/>
<dbReference type="PATRIC" id="fig|243090.15.peg.3284"/>
<dbReference type="eggNOG" id="COG0211">
    <property type="taxonomic scope" value="Bacteria"/>
</dbReference>
<dbReference type="HOGENOM" id="CLU_095424_4_0_0"/>
<dbReference type="InParanoid" id="Q7UPR5"/>
<dbReference type="OrthoDB" id="9803474at2"/>
<dbReference type="Proteomes" id="UP000001025">
    <property type="component" value="Chromosome"/>
</dbReference>
<dbReference type="GO" id="GO:0022625">
    <property type="term" value="C:cytosolic large ribosomal subunit"/>
    <property type="evidence" value="ECO:0000318"/>
    <property type="project" value="GO_Central"/>
</dbReference>
<dbReference type="GO" id="GO:0003735">
    <property type="term" value="F:structural constituent of ribosome"/>
    <property type="evidence" value="ECO:0000318"/>
    <property type="project" value="GO_Central"/>
</dbReference>
<dbReference type="GO" id="GO:0006412">
    <property type="term" value="P:translation"/>
    <property type="evidence" value="ECO:0007669"/>
    <property type="project" value="UniProtKB-UniRule"/>
</dbReference>
<dbReference type="FunFam" id="2.40.50.100:FF:000026">
    <property type="entry name" value="50S ribosomal protein L27"/>
    <property type="match status" value="1"/>
</dbReference>
<dbReference type="Gene3D" id="2.40.50.100">
    <property type="match status" value="1"/>
</dbReference>
<dbReference type="HAMAP" id="MF_00539">
    <property type="entry name" value="Ribosomal_bL27"/>
    <property type="match status" value="1"/>
</dbReference>
<dbReference type="InterPro" id="IPR001684">
    <property type="entry name" value="Ribosomal_bL27"/>
</dbReference>
<dbReference type="NCBIfam" id="TIGR00062">
    <property type="entry name" value="L27"/>
    <property type="match status" value="1"/>
</dbReference>
<dbReference type="PANTHER" id="PTHR15893:SF0">
    <property type="entry name" value="LARGE RIBOSOMAL SUBUNIT PROTEIN BL27M"/>
    <property type="match status" value="1"/>
</dbReference>
<dbReference type="PANTHER" id="PTHR15893">
    <property type="entry name" value="RIBOSOMAL PROTEIN L27"/>
    <property type="match status" value="1"/>
</dbReference>
<dbReference type="Pfam" id="PF01016">
    <property type="entry name" value="Ribosomal_L27"/>
    <property type="match status" value="1"/>
</dbReference>
<dbReference type="PRINTS" id="PR00063">
    <property type="entry name" value="RIBOSOMALL27"/>
</dbReference>
<dbReference type="SUPFAM" id="SSF110324">
    <property type="entry name" value="Ribosomal L27 protein-like"/>
    <property type="match status" value="1"/>
</dbReference>
<sequence length="81" mass="8698">MAHKKGQGSSRNGRDSNAQRRGVKKFGGEAVIAGNILVRQVGTKFHPGAGVGMGNDYTLFALVDGKVRFDREGRRVNIDVA</sequence>
<comment type="similarity">
    <text evidence="1">Belongs to the bacterial ribosomal protein bL27 family.</text>
</comment>
<gene>
    <name evidence="1" type="primary">rpmA</name>
    <name type="ordered locus">RB6770</name>
</gene>
<evidence type="ECO:0000255" key="1">
    <source>
        <dbReference type="HAMAP-Rule" id="MF_00539"/>
    </source>
</evidence>
<evidence type="ECO:0000256" key="2">
    <source>
        <dbReference type="SAM" id="MobiDB-lite"/>
    </source>
</evidence>
<evidence type="ECO:0000305" key="3"/>
<keyword id="KW-1185">Reference proteome</keyword>
<keyword id="KW-0687">Ribonucleoprotein</keyword>
<keyword id="KW-0689">Ribosomal protein</keyword>
<reference key="1">
    <citation type="journal article" date="2003" name="Proc. Natl. Acad. Sci. U.S.A.">
        <title>Complete genome sequence of the marine planctomycete Pirellula sp. strain 1.</title>
        <authorList>
            <person name="Gloeckner F.O."/>
            <person name="Kube M."/>
            <person name="Bauer M."/>
            <person name="Teeling H."/>
            <person name="Lombardot T."/>
            <person name="Ludwig W."/>
            <person name="Gade D."/>
            <person name="Beck A."/>
            <person name="Borzym K."/>
            <person name="Heitmann K."/>
            <person name="Rabus R."/>
            <person name="Schlesner H."/>
            <person name="Amann R."/>
            <person name="Reinhardt R."/>
        </authorList>
    </citation>
    <scope>NUCLEOTIDE SEQUENCE [LARGE SCALE GENOMIC DNA]</scope>
    <source>
        <strain>DSM 10527 / NCIMB 13988 / SH1</strain>
    </source>
</reference>
<name>RL27_RHOBA</name>
<protein>
    <recommendedName>
        <fullName evidence="1">Large ribosomal subunit protein bL27</fullName>
    </recommendedName>
    <alternativeName>
        <fullName evidence="3">50S ribosomal protein L27</fullName>
    </alternativeName>
</protein>
<organism>
    <name type="scientific">Rhodopirellula baltica (strain DSM 10527 / NCIMB 13988 / SH1)</name>
    <dbReference type="NCBI Taxonomy" id="243090"/>
    <lineage>
        <taxon>Bacteria</taxon>
        <taxon>Pseudomonadati</taxon>
        <taxon>Planctomycetota</taxon>
        <taxon>Planctomycetia</taxon>
        <taxon>Pirellulales</taxon>
        <taxon>Pirellulaceae</taxon>
        <taxon>Rhodopirellula</taxon>
    </lineage>
</organism>
<proteinExistence type="inferred from homology"/>
<accession>Q7UPR5</accession>
<feature type="chain" id="PRO_0000181153" description="Large ribosomal subunit protein bL27">
    <location>
        <begin position="1"/>
        <end position="81"/>
    </location>
</feature>
<feature type="region of interest" description="Disordered" evidence="2">
    <location>
        <begin position="1"/>
        <end position="22"/>
    </location>
</feature>